<keyword id="KW-0326">Glycosidase</keyword>
<keyword id="KW-0378">Hydrolase</keyword>
<keyword id="KW-1185">Reference proteome</keyword>
<dbReference type="EC" id="3.2.1.85" evidence="1"/>
<dbReference type="EMBL" id="AE001437">
    <property type="protein sequence ID" value="AAK80905.1"/>
    <property type="molecule type" value="Genomic_DNA"/>
</dbReference>
<dbReference type="PIR" id="F97264">
    <property type="entry name" value="F97264"/>
</dbReference>
<dbReference type="RefSeq" id="NP_349565.1">
    <property type="nucleotide sequence ID" value="NC_003030.1"/>
</dbReference>
<dbReference type="RefSeq" id="WP_010966246.1">
    <property type="nucleotide sequence ID" value="NC_003030.1"/>
</dbReference>
<dbReference type="SMR" id="Q97EZ2"/>
<dbReference type="STRING" id="272562.CA_C2963"/>
<dbReference type="CAZy" id="GH1">
    <property type="family name" value="Glycoside Hydrolase Family 1"/>
</dbReference>
<dbReference type="GeneID" id="44999451"/>
<dbReference type="KEGG" id="cac:CA_C2963"/>
<dbReference type="PATRIC" id="fig|272562.8.peg.3147"/>
<dbReference type="eggNOG" id="COG2723">
    <property type="taxonomic scope" value="Bacteria"/>
</dbReference>
<dbReference type="HOGENOM" id="CLU_001859_1_3_9"/>
<dbReference type="OrthoDB" id="2339329at2"/>
<dbReference type="UniPathway" id="UPA00542">
    <property type="reaction ID" value="UER00605"/>
</dbReference>
<dbReference type="Proteomes" id="UP000000814">
    <property type="component" value="Chromosome"/>
</dbReference>
<dbReference type="GO" id="GO:0005829">
    <property type="term" value="C:cytosol"/>
    <property type="evidence" value="ECO:0007669"/>
    <property type="project" value="TreeGrafter"/>
</dbReference>
<dbReference type="GO" id="GO:0033920">
    <property type="term" value="F:6-phospho-beta-galactosidase activity"/>
    <property type="evidence" value="ECO:0007669"/>
    <property type="project" value="UniProtKB-UniRule"/>
</dbReference>
<dbReference type="GO" id="GO:0008422">
    <property type="term" value="F:beta-glucosidase activity"/>
    <property type="evidence" value="ECO:0007669"/>
    <property type="project" value="TreeGrafter"/>
</dbReference>
<dbReference type="GO" id="GO:0019512">
    <property type="term" value="P:lactose catabolic process via tagatose-6-phosphate"/>
    <property type="evidence" value="ECO:0007669"/>
    <property type="project" value="InterPro"/>
</dbReference>
<dbReference type="FunFam" id="3.20.20.80:FF:000004">
    <property type="entry name" value="Beta-glucosidase 6-phospho-beta-glucosidase"/>
    <property type="match status" value="1"/>
</dbReference>
<dbReference type="Gene3D" id="3.20.20.80">
    <property type="entry name" value="Glycosidases"/>
    <property type="match status" value="1"/>
</dbReference>
<dbReference type="HAMAP" id="MF_01574">
    <property type="entry name" value="LacG"/>
    <property type="match status" value="1"/>
</dbReference>
<dbReference type="InterPro" id="IPR005928">
    <property type="entry name" value="6P-beta-galactosidase"/>
</dbReference>
<dbReference type="InterPro" id="IPR001360">
    <property type="entry name" value="Glyco_hydro_1"/>
</dbReference>
<dbReference type="InterPro" id="IPR018120">
    <property type="entry name" value="Glyco_hydro_1_AS"/>
</dbReference>
<dbReference type="InterPro" id="IPR033132">
    <property type="entry name" value="Glyco_hydro_1_N_CS"/>
</dbReference>
<dbReference type="InterPro" id="IPR017853">
    <property type="entry name" value="Glycoside_hydrolase_SF"/>
</dbReference>
<dbReference type="NCBIfam" id="TIGR01233">
    <property type="entry name" value="lacG"/>
    <property type="match status" value="1"/>
</dbReference>
<dbReference type="NCBIfam" id="NF010036">
    <property type="entry name" value="PRK13511.1"/>
    <property type="match status" value="1"/>
</dbReference>
<dbReference type="PANTHER" id="PTHR10353">
    <property type="entry name" value="GLYCOSYL HYDROLASE"/>
    <property type="match status" value="1"/>
</dbReference>
<dbReference type="PANTHER" id="PTHR10353:SF36">
    <property type="entry name" value="LP05116P"/>
    <property type="match status" value="1"/>
</dbReference>
<dbReference type="Pfam" id="PF00232">
    <property type="entry name" value="Glyco_hydro_1"/>
    <property type="match status" value="1"/>
</dbReference>
<dbReference type="PRINTS" id="PR00131">
    <property type="entry name" value="GLHYDRLASE1"/>
</dbReference>
<dbReference type="SUPFAM" id="SSF51445">
    <property type="entry name" value="(Trans)glycosidases"/>
    <property type="match status" value="1"/>
</dbReference>
<dbReference type="PROSITE" id="PS00572">
    <property type="entry name" value="GLYCOSYL_HYDROL_F1_1"/>
    <property type="match status" value="1"/>
</dbReference>
<dbReference type="PROSITE" id="PS00653">
    <property type="entry name" value="GLYCOSYL_HYDROL_F1_2"/>
    <property type="match status" value="1"/>
</dbReference>
<protein>
    <recommendedName>
        <fullName evidence="1">6-phospho-beta-galactosidase</fullName>
        <ecNumber evidence="1">3.2.1.85</ecNumber>
    </recommendedName>
    <alternativeName>
        <fullName evidence="1">Beta-D-phosphogalactoside galactohydrolase</fullName>
        <shortName evidence="1">PGALase</shortName>
    </alternativeName>
    <alternativeName>
        <fullName evidence="1">P-beta-Gal</fullName>
        <shortName evidence="1">PBG</shortName>
    </alternativeName>
</protein>
<feature type="chain" id="PRO_0000260722" description="6-phospho-beta-galactosidase">
    <location>
        <begin position="1"/>
        <end position="474"/>
    </location>
</feature>
<feature type="active site" description="Proton donor" evidence="1">
    <location>
        <position position="160"/>
    </location>
</feature>
<feature type="active site" description="Nucleophile" evidence="1">
    <location>
        <position position="374"/>
    </location>
</feature>
<feature type="binding site" evidence="1">
    <location>
        <position position="18"/>
    </location>
    <ligand>
        <name>D-galactose 6-phosphate</name>
        <dbReference type="ChEBI" id="CHEBI:91004"/>
    </ligand>
</feature>
<feature type="binding site" evidence="1">
    <location>
        <position position="115"/>
    </location>
    <ligand>
        <name>D-galactose 6-phosphate</name>
        <dbReference type="ChEBI" id="CHEBI:91004"/>
    </ligand>
</feature>
<feature type="binding site" evidence="1">
    <location>
        <position position="159"/>
    </location>
    <ligand>
        <name>D-galactose 6-phosphate</name>
        <dbReference type="ChEBI" id="CHEBI:91004"/>
    </ligand>
</feature>
<feature type="binding site" evidence="1">
    <location>
        <position position="160"/>
    </location>
    <ligand>
        <name>D-galactose 6-phosphate</name>
        <dbReference type="ChEBI" id="CHEBI:91004"/>
    </ligand>
</feature>
<feature type="binding site" evidence="1">
    <location>
        <position position="296"/>
    </location>
    <ligand>
        <name>D-galactose 6-phosphate</name>
        <dbReference type="ChEBI" id="CHEBI:91004"/>
    </ligand>
</feature>
<feature type="binding site" evidence="1">
    <location>
        <position position="427"/>
    </location>
    <ligand>
        <name>D-galactose 6-phosphate</name>
        <dbReference type="ChEBI" id="CHEBI:91004"/>
    </ligand>
</feature>
<feature type="binding site" evidence="1">
    <location>
        <position position="428"/>
    </location>
    <ligand>
        <name>D-galactose 6-phosphate</name>
        <dbReference type="ChEBI" id="CHEBI:91004"/>
    </ligand>
</feature>
<feature type="binding site" evidence="1">
    <location>
        <position position="434"/>
    </location>
    <ligand>
        <name>D-galactose 6-phosphate</name>
        <dbReference type="ChEBI" id="CHEBI:91004"/>
    </ligand>
</feature>
<feature type="binding site" evidence="1">
    <location>
        <position position="436"/>
    </location>
    <ligand>
        <name>D-galactose 6-phosphate</name>
        <dbReference type="ChEBI" id="CHEBI:91004"/>
    </ligand>
</feature>
<reference key="1">
    <citation type="journal article" date="2001" name="J. Bacteriol.">
        <title>Genome sequence and comparative analysis of the solvent-producing bacterium Clostridium acetobutylicum.</title>
        <authorList>
            <person name="Noelling J."/>
            <person name="Breton G."/>
            <person name="Omelchenko M.V."/>
            <person name="Makarova K.S."/>
            <person name="Zeng Q."/>
            <person name="Gibson R."/>
            <person name="Lee H.M."/>
            <person name="Dubois J."/>
            <person name="Qiu D."/>
            <person name="Hitti J."/>
            <person name="Wolf Y.I."/>
            <person name="Tatusov R.L."/>
            <person name="Sabathe F."/>
            <person name="Doucette-Stamm L.A."/>
            <person name="Soucaille P."/>
            <person name="Daly M.J."/>
            <person name="Bennett G.N."/>
            <person name="Koonin E.V."/>
            <person name="Smith D.R."/>
        </authorList>
    </citation>
    <scope>NUCLEOTIDE SEQUENCE [LARGE SCALE GENOMIC DNA]</scope>
    <source>
        <strain>ATCC 824 / DSM 792 / JCM 1419 / IAM 19013 / LMG 5710 / NBRC 13948 / NRRL B-527 / VKM B-1787 / 2291 / W</strain>
    </source>
</reference>
<gene>
    <name evidence="1" type="primary">lacG</name>
    <name type="ordered locus">CA_C2963</name>
</gene>
<comment type="catalytic activity">
    <reaction evidence="1">
        <text>a 6-phospho-beta-D-galactoside + H2O = D-galactose 6-phosphate + an alcohol</text>
        <dbReference type="Rhea" id="RHEA:24568"/>
        <dbReference type="ChEBI" id="CHEBI:15377"/>
        <dbReference type="ChEBI" id="CHEBI:30879"/>
        <dbReference type="ChEBI" id="CHEBI:58534"/>
        <dbReference type="ChEBI" id="CHEBI:91004"/>
        <dbReference type="EC" id="3.2.1.85"/>
    </reaction>
</comment>
<comment type="pathway">
    <text evidence="1">Carbohydrate metabolism; lactose degradation; D-galactose 6-phosphate and beta-D-glucose from lactose 6-phosphate: step 1/1.</text>
</comment>
<comment type="similarity">
    <text evidence="1">Belongs to the glycosyl hydrolase 1 family.</text>
</comment>
<sequence>MNNFGEDFIFGGATAAYQAEGATKEDGKGPCIWDEYLKKEGRFTGDTASDFYHKYKEDLKFSRKFGVNGIRISIAWSRVIPDGKGEVNPKGLKFYSDLIDECIKNNVEPFVTLHHFDTPLTLFKDGDWLNRNNIDYFVRFAKVCFEALGDRVKKWITFNEAWAVAQNGYIIGNFPPSIKYDIPKAAQSMHNMMVAHAKVVELYKSMNLDGEIGIVHTLEGKYPITDSKEDKEAAYLDYMISNKFMLDACFKGEYPKETEKTINEIMSKNGGELKIYDGDLEVLKKASSKIDFLGMNYYSSHFLKAYEGESRIHHNGTGEKGTSIFALKGIGERVNNPEVPTTDWDWPIYPKGLHDMLVRIKNEYPNYKKIYVTENGMGYKDDFKDGKIDDTPRIDYINKHLEAILKAKNEGVVVKGYFVWSLMDVLSWSNGYNKRYGLFYVDFKTQNRYAKKSAYWFKRISYEKKLIDFSDIEY</sequence>
<proteinExistence type="inferred from homology"/>
<accession>Q97EZ2</accession>
<name>LACG_CLOAB</name>
<organism>
    <name type="scientific">Clostridium acetobutylicum (strain ATCC 824 / DSM 792 / JCM 1419 / IAM 19013 / LMG 5710 / NBRC 13948 / NRRL B-527 / VKM B-1787 / 2291 / W)</name>
    <dbReference type="NCBI Taxonomy" id="272562"/>
    <lineage>
        <taxon>Bacteria</taxon>
        <taxon>Bacillati</taxon>
        <taxon>Bacillota</taxon>
        <taxon>Clostridia</taxon>
        <taxon>Eubacteriales</taxon>
        <taxon>Clostridiaceae</taxon>
        <taxon>Clostridium</taxon>
    </lineage>
</organism>
<evidence type="ECO:0000255" key="1">
    <source>
        <dbReference type="HAMAP-Rule" id="MF_01574"/>
    </source>
</evidence>